<keyword id="KW-0067">ATP-binding</keyword>
<keyword id="KW-0963">Cytoplasm</keyword>
<keyword id="KW-0227">DNA damage</keyword>
<keyword id="KW-0233">DNA recombination</keyword>
<keyword id="KW-0234">DNA repair</keyword>
<keyword id="KW-0238">DNA-binding</keyword>
<keyword id="KW-0378">Hydrolase</keyword>
<keyword id="KW-0547">Nucleotide-binding</keyword>
<keyword id="KW-1185">Reference proteome</keyword>
<feature type="chain" id="PRO_1000074103" description="Holliday junction branch migration complex subunit RuvB">
    <location>
        <begin position="1"/>
        <end position="338"/>
    </location>
</feature>
<feature type="region of interest" description="Disordered" evidence="2">
    <location>
        <begin position="1"/>
        <end position="22"/>
    </location>
</feature>
<feature type="region of interest" description="Large ATPase domain (RuvB-L)" evidence="1">
    <location>
        <begin position="4"/>
        <end position="187"/>
    </location>
</feature>
<feature type="region of interest" description="Small ATPAse domain (RuvB-S)" evidence="1">
    <location>
        <begin position="188"/>
        <end position="258"/>
    </location>
</feature>
<feature type="region of interest" description="Head domain (RuvB-H)" evidence="1">
    <location>
        <begin position="261"/>
        <end position="338"/>
    </location>
</feature>
<feature type="binding site" evidence="1">
    <location>
        <position position="27"/>
    </location>
    <ligand>
        <name>ATP</name>
        <dbReference type="ChEBI" id="CHEBI:30616"/>
    </ligand>
</feature>
<feature type="binding site" evidence="1">
    <location>
        <position position="68"/>
    </location>
    <ligand>
        <name>ATP</name>
        <dbReference type="ChEBI" id="CHEBI:30616"/>
    </ligand>
</feature>
<feature type="binding site" evidence="1">
    <location>
        <position position="71"/>
    </location>
    <ligand>
        <name>ATP</name>
        <dbReference type="ChEBI" id="CHEBI:30616"/>
    </ligand>
</feature>
<feature type="binding site" evidence="1">
    <location>
        <position position="72"/>
    </location>
    <ligand>
        <name>ATP</name>
        <dbReference type="ChEBI" id="CHEBI:30616"/>
    </ligand>
</feature>
<feature type="binding site" evidence="1">
    <location>
        <position position="72"/>
    </location>
    <ligand>
        <name>Mg(2+)</name>
        <dbReference type="ChEBI" id="CHEBI:18420"/>
    </ligand>
</feature>
<feature type="binding site" evidence="1">
    <location>
        <position position="73"/>
    </location>
    <ligand>
        <name>ATP</name>
        <dbReference type="ChEBI" id="CHEBI:30616"/>
    </ligand>
</feature>
<feature type="binding site" evidence="1">
    <location>
        <begin position="134"/>
        <end position="136"/>
    </location>
    <ligand>
        <name>ATP</name>
        <dbReference type="ChEBI" id="CHEBI:30616"/>
    </ligand>
</feature>
<feature type="binding site" evidence="1">
    <location>
        <position position="177"/>
    </location>
    <ligand>
        <name>ATP</name>
        <dbReference type="ChEBI" id="CHEBI:30616"/>
    </ligand>
</feature>
<feature type="binding site" evidence="1">
    <location>
        <position position="187"/>
    </location>
    <ligand>
        <name>ATP</name>
        <dbReference type="ChEBI" id="CHEBI:30616"/>
    </ligand>
</feature>
<feature type="binding site" evidence="1">
    <location>
        <position position="224"/>
    </location>
    <ligand>
        <name>ATP</name>
        <dbReference type="ChEBI" id="CHEBI:30616"/>
    </ligand>
</feature>
<feature type="binding site" evidence="1">
    <location>
        <position position="297"/>
    </location>
    <ligand>
        <name>DNA</name>
        <dbReference type="ChEBI" id="CHEBI:16991"/>
    </ligand>
</feature>
<feature type="binding site" evidence="1">
    <location>
        <position position="316"/>
    </location>
    <ligand>
        <name>DNA</name>
        <dbReference type="ChEBI" id="CHEBI:16991"/>
    </ligand>
</feature>
<feature type="binding site" evidence="1">
    <location>
        <position position="321"/>
    </location>
    <ligand>
        <name>DNA</name>
        <dbReference type="ChEBI" id="CHEBI:16991"/>
    </ligand>
</feature>
<protein>
    <recommendedName>
        <fullName evidence="1">Holliday junction branch migration complex subunit RuvB</fullName>
        <ecNumber evidence="1">3.6.4.-</ecNumber>
    </recommendedName>
</protein>
<gene>
    <name evidence="1" type="primary">ruvB</name>
    <name type="ordered locus">Ssed_2034</name>
</gene>
<sequence>MIEADRLIHAEPQGPEERDEQIDRAMRPKLLDEYTGQDDTRAQLKIFIKAAQNRGEALDHMLIYGPPGLGKTTLAMIVANEMGVNIKSTSGPVLEKAGDLAALLTNLEPGDVLFIDEIHRLSSVVEEILYPAMEDYQLDIMIGEGPAARSIKLDLPPFTLIGATTRAGALTSPLRARFGIPLRLEFYNTKDLSSIVSRSANVLELPIDDEGAIELAKRSRGTPRIANRLLRRVRDFAEVKHDGEINKAVADLALDMLDIDSEGFDYMDRKLLLAIIDKFMGGPVGLDNLAAAIGEERETIEDVLEPFLIQQGFIQRTPRGRIATDRAYRHFDIIQPEK</sequence>
<comment type="function">
    <text evidence="1">The RuvA-RuvB-RuvC complex processes Holliday junction (HJ) DNA during genetic recombination and DNA repair, while the RuvA-RuvB complex plays an important role in the rescue of blocked DNA replication forks via replication fork reversal (RFR). RuvA specifically binds to HJ cruciform DNA, conferring on it an open structure. The RuvB hexamer acts as an ATP-dependent pump, pulling dsDNA into and through the RuvAB complex. RuvB forms 2 homohexamers on either side of HJ DNA bound by 1 or 2 RuvA tetramers; 4 subunits per hexamer contact DNA at a time. Coordinated motions by a converter formed by DNA-disengaged RuvB subunits stimulates ATP hydrolysis and nucleotide exchange. Immobilization of the converter enables RuvB to convert the ATP-contained energy into a lever motion, pulling 2 nucleotides of DNA out of the RuvA tetramer per ATP hydrolyzed, thus driving DNA branch migration. The RuvB motors rotate together with the DNA substrate, which together with the progressing nucleotide cycle form the mechanistic basis for DNA recombination by continuous HJ branch migration. Branch migration allows RuvC to scan DNA until it finds its consensus sequence, where it cleaves and resolves cruciform DNA.</text>
</comment>
<comment type="catalytic activity">
    <reaction evidence="1">
        <text>ATP + H2O = ADP + phosphate + H(+)</text>
        <dbReference type="Rhea" id="RHEA:13065"/>
        <dbReference type="ChEBI" id="CHEBI:15377"/>
        <dbReference type="ChEBI" id="CHEBI:15378"/>
        <dbReference type="ChEBI" id="CHEBI:30616"/>
        <dbReference type="ChEBI" id="CHEBI:43474"/>
        <dbReference type="ChEBI" id="CHEBI:456216"/>
    </reaction>
</comment>
<comment type="subunit">
    <text evidence="1">Homohexamer. Forms an RuvA(8)-RuvB(12)-Holliday junction (HJ) complex. HJ DNA is sandwiched between 2 RuvA tetramers; dsDNA enters through RuvA and exits via RuvB. An RuvB hexamer assembles on each DNA strand where it exits the tetramer. Each RuvB hexamer is contacted by two RuvA subunits (via domain III) on 2 adjacent RuvB subunits; this complex drives branch migration. In the full resolvosome a probable DNA-RuvA(4)-RuvB(12)-RuvC(2) complex forms which resolves the HJ.</text>
</comment>
<comment type="subcellular location">
    <subcellularLocation>
        <location evidence="1">Cytoplasm</location>
    </subcellularLocation>
</comment>
<comment type="domain">
    <text evidence="1">Has 3 domains, the large (RuvB-L) and small ATPase (RuvB-S) domains and the C-terminal head (RuvB-H) domain. The head domain binds DNA, while the ATPase domains jointly bind ATP, ADP or are empty depending on the state of the subunit in the translocation cycle. During a single DNA translocation step the structure of each domain remains the same, but their relative positions change.</text>
</comment>
<comment type="similarity">
    <text evidence="1">Belongs to the RuvB family.</text>
</comment>
<organism>
    <name type="scientific">Shewanella sediminis (strain HAW-EB3)</name>
    <dbReference type="NCBI Taxonomy" id="425104"/>
    <lineage>
        <taxon>Bacteria</taxon>
        <taxon>Pseudomonadati</taxon>
        <taxon>Pseudomonadota</taxon>
        <taxon>Gammaproteobacteria</taxon>
        <taxon>Alteromonadales</taxon>
        <taxon>Shewanellaceae</taxon>
        <taxon>Shewanella</taxon>
    </lineage>
</organism>
<proteinExistence type="inferred from homology"/>
<dbReference type="EC" id="3.6.4.-" evidence="1"/>
<dbReference type="EMBL" id="CP000821">
    <property type="protein sequence ID" value="ABV36643.1"/>
    <property type="molecule type" value="Genomic_DNA"/>
</dbReference>
<dbReference type="RefSeq" id="WP_012142378.1">
    <property type="nucleotide sequence ID" value="NC_009831.1"/>
</dbReference>
<dbReference type="SMR" id="A8FUX0"/>
<dbReference type="STRING" id="425104.Ssed_2034"/>
<dbReference type="KEGG" id="sse:Ssed_2034"/>
<dbReference type="eggNOG" id="COG2255">
    <property type="taxonomic scope" value="Bacteria"/>
</dbReference>
<dbReference type="HOGENOM" id="CLU_055599_1_0_6"/>
<dbReference type="OrthoDB" id="9804478at2"/>
<dbReference type="Proteomes" id="UP000002015">
    <property type="component" value="Chromosome"/>
</dbReference>
<dbReference type="GO" id="GO:0005737">
    <property type="term" value="C:cytoplasm"/>
    <property type="evidence" value="ECO:0007669"/>
    <property type="project" value="UniProtKB-SubCell"/>
</dbReference>
<dbReference type="GO" id="GO:0048476">
    <property type="term" value="C:Holliday junction resolvase complex"/>
    <property type="evidence" value="ECO:0007669"/>
    <property type="project" value="UniProtKB-UniRule"/>
</dbReference>
<dbReference type="GO" id="GO:0005524">
    <property type="term" value="F:ATP binding"/>
    <property type="evidence" value="ECO:0007669"/>
    <property type="project" value="UniProtKB-UniRule"/>
</dbReference>
<dbReference type="GO" id="GO:0016887">
    <property type="term" value="F:ATP hydrolysis activity"/>
    <property type="evidence" value="ECO:0007669"/>
    <property type="project" value="InterPro"/>
</dbReference>
<dbReference type="GO" id="GO:0000400">
    <property type="term" value="F:four-way junction DNA binding"/>
    <property type="evidence" value="ECO:0007669"/>
    <property type="project" value="UniProtKB-UniRule"/>
</dbReference>
<dbReference type="GO" id="GO:0009378">
    <property type="term" value="F:four-way junction helicase activity"/>
    <property type="evidence" value="ECO:0007669"/>
    <property type="project" value="InterPro"/>
</dbReference>
<dbReference type="GO" id="GO:0006310">
    <property type="term" value="P:DNA recombination"/>
    <property type="evidence" value="ECO:0007669"/>
    <property type="project" value="UniProtKB-UniRule"/>
</dbReference>
<dbReference type="GO" id="GO:0006281">
    <property type="term" value="P:DNA repair"/>
    <property type="evidence" value="ECO:0007669"/>
    <property type="project" value="UniProtKB-UniRule"/>
</dbReference>
<dbReference type="CDD" id="cd00009">
    <property type="entry name" value="AAA"/>
    <property type="match status" value="1"/>
</dbReference>
<dbReference type="FunFam" id="1.10.10.10:FF:000086">
    <property type="entry name" value="Holliday junction ATP-dependent DNA helicase RuvB"/>
    <property type="match status" value="1"/>
</dbReference>
<dbReference type="FunFam" id="1.10.8.60:FF:000023">
    <property type="entry name" value="Holliday junction ATP-dependent DNA helicase RuvB"/>
    <property type="match status" value="1"/>
</dbReference>
<dbReference type="FunFam" id="3.40.50.300:FF:000073">
    <property type="entry name" value="Holliday junction ATP-dependent DNA helicase RuvB"/>
    <property type="match status" value="1"/>
</dbReference>
<dbReference type="Gene3D" id="1.10.8.60">
    <property type="match status" value="1"/>
</dbReference>
<dbReference type="Gene3D" id="3.40.50.300">
    <property type="entry name" value="P-loop containing nucleotide triphosphate hydrolases"/>
    <property type="match status" value="1"/>
</dbReference>
<dbReference type="Gene3D" id="1.10.10.10">
    <property type="entry name" value="Winged helix-like DNA-binding domain superfamily/Winged helix DNA-binding domain"/>
    <property type="match status" value="1"/>
</dbReference>
<dbReference type="HAMAP" id="MF_00016">
    <property type="entry name" value="DNA_HJ_migration_RuvB"/>
    <property type="match status" value="1"/>
</dbReference>
<dbReference type="InterPro" id="IPR003593">
    <property type="entry name" value="AAA+_ATPase"/>
</dbReference>
<dbReference type="InterPro" id="IPR041445">
    <property type="entry name" value="AAA_lid_4"/>
</dbReference>
<dbReference type="InterPro" id="IPR004605">
    <property type="entry name" value="DNA_helicase_Holl-junc_RuvB"/>
</dbReference>
<dbReference type="InterPro" id="IPR027417">
    <property type="entry name" value="P-loop_NTPase"/>
</dbReference>
<dbReference type="InterPro" id="IPR008824">
    <property type="entry name" value="RuvB-like_N"/>
</dbReference>
<dbReference type="InterPro" id="IPR008823">
    <property type="entry name" value="RuvB_C"/>
</dbReference>
<dbReference type="InterPro" id="IPR036388">
    <property type="entry name" value="WH-like_DNA-bd_sf"/>
</dbReference>
<dbReference type="InterPro" id="IPR036390">
    <property type="entry name" value="WH_DNA-bd_sf"/>
</dbReference>
<dbReference type="NCBIfam" id="NF000868">
    <property type="entry name" value="PRK00080.1"/>
    <property type="match status" value="1"/>
</dbReference>
<dbReference type="NCBIfam" id="TIGR00635">
    <property type="entry name" value="ruvB"/>
    <property type="match status" value="1"/>
</dbReference>
<dbReference type="PANTHER" id="PTHR42848">
    <property type="match status" value="1"/>
</dbReference>
<dbReference type="PANTHER" id="PTHR42848:SF1">
    <property type="entry name" value="HOLLIDAY JUNCTION BRANCH MIGRATION COMPLEX SUBUNIT RUVB"/>
    <property type="match status" value="1"/>
</dbReference>
<dbReference type="Pfam" id="PF17864">
    <property type="entry name" value="AAA_lid_4"/>
    <property type="match status" value="1"/>
</dbReference>
<dbReference type="Pfam" id="PF05491">
    <property type="entry name" value="RuvB_C"/>
    <property type="match status" value="1"/>
</dbReference>
<dbReference type="Pfam" id="PF05496">
    <property type="entry name" value="RuvB_N"/>
    <property type="match status" value="1"/>
</dbReference>
<dbReference type="SMART" id="SM00382">
    <property type="entry name" value="AAA"/>
    <property type="match status" value="1"/>
</dbReference>
<dbReference type="SUPFAM" id="SSF52540">
    <property type="entry name" value="P-loop containing nucleoside triphosphate hydrolases"/>
    <property type="match status" value="1"/>
</dbReference>
<dbReference type="SUPFAM" id="SSF46785">
    <property type="entry name" value="Winged helix' DNA-binding domain"/>
    <property type="match status" value="1"/>
</dbReference>
<evidence type="ECO:0000255" key="1">
    <source>
        <dbReference type="HAMAP-Rule" id="MF_00016"/>
    </source>
</evidence>
<evidence type="ECO:0000256" key="2">
    <source>
        <dbReference type="SAM" id="MobiDB-lite"/>
    </source>
</evidence>
<name>RUVB_SHESH</name>
<reference key="1">
    <citation type="submission" date="2007-08" db="EMBL/GenBank/DDBJ databases">
        <title>Complete sequence of Shewanella sediminis HAW-EB3.</title>
        <authorList>
            <consortium name="US DOE Joint Genome Institute"/>
            <person name="Copeland A."/>
            <person name="Lucas S."/>
            <person name="Lapidus A."/>
            <person name="Barry K."/>
            <person name="Glavina del Rio T."/>
            <person name="Dalin E."/>
            <person name="Tice H."/>
            <person name="Pitluck S."/>
            <person name="Chertkov O."/>
            <person name="Brettin T."/>
            <person name="Bruce D."/>
            <person name="Detter J.C."/>
            <person name="Han C."/>
            <person name="Schmutz J."/>
            <person name="Larimer F."/>
            <person name="Land M."/>
            <person name="Hauser L."/>
            <person name="Kyrpides N."/>
            <person name="Kim E."/>
            <person name="Zhao J.-S."/>
            <person name="Richardson P."/>
        </authorList>
    </citation>
    <scope>NUCLEOTIDE SEQUENCE [LARGE SCALE GENOMIC DNA]</scope>
    <source>
        <strain>HAW-EB3</strain>
    </source>
</reference>
<accession>A8FUX0</accession>